<comment type="catalytic activity">
    <reaction evidence="1">
        <text>tRNA(Cys) + L-cysteine + ATP = L-cysteinyl-tRNA(Cys) + AMP + diphosphate</text>
        <dbReference type="Rhea" id="RHEA:17773"/>
        <dbReference type="Rhea" id="RHEA-COMP:9661"/>
        <dbReference type="Rhea" id="RHEA-COMP:9679"/>
        <dbReference type="ChEBI" id="CHEBI:30616"/>
        <dbReference type="ChEBI" id="CHEBI:33019"/>
        <dbReference type="ChEBI" id="CHEBI:35235"/>
        <dbReference type="ChEBI" id="CHEBI:78442"/>
        <dbReference type="ChEBI" id="CHEBI:78517"/>
        <dbReference type="ChEBI" id="CHEBI:456215"/>
        <dbReference type="EC" id="6.1.1.16"/>
    </reaction>
</comment>
<comment type="cofactor">
    <cofactor evidence="1">
        <name>Zn(2+)</name>
        <dbReference type="ChEBI" id="CHEBI:29105"/>
    </cofactor>
    <text evidence="1">Binds 1 zinc ion per subunit.</text>
</comment>
<comment type="subunit">
    <text evidence="1">Monomer.</text>
</comment>
<comment type="subcellular location">
    <subcellularLocation>
        <location evidence="1">Cytoplasm</location>
    </subcellularLocation>
</comment>
<comment type="similarity">
    <text evidence="1">Belongs to the class-I aminoacyl-tRNA synthetase family.</text>
</comment>
<name>SYC_ECOK1</name>
<organism>
    <name type="scientific">Escherichia coli O1:K1 / APEC</name>
    <dbReference type="NCBI Taxonomy" id="405955"/>
    <lineage>
        <taxon>Bacteria</taxon>
        <taxon>Pseudomonadati</taxon>
        <taxon>Pseudomonadota</taxon>
        <taxon>Gammaproteobacteria</taxon>
        <taxon>Enterobacterales</taxon>
        <taxon>Enterobacteriaceae</taxon>
        <taxon>Escherichia</taxon>
    </lineage>
</organism>
<feature type="chain" id="PRO_0000332821" description="Cysteine--tRNA ligase">
    <location>
        <begin position="1"/>
        <end position="461"/>
    </location>
</feature>
<feature type="short sequence motif" description="'HIGH' region">
    <location>
        <begin position="30"/>
        <end position="40"/>
    </location>
</feature>
<feature type="short sequence motif" description="'KMSKS' region">
    <location>
        <begin position="266"/>
        <end position="270"/>
    </location>
</feature>
<feature type="binding site" evidence="1">
    <location>
        <position position="28"/>
    </location>
    <ligand>
        <name>Zn(2+)</name>
        <dbReference type="ChEBI" id="CHEBI:29105"/>
    </ligand>
</feature>
<feature type="binding site" evidence="1">
    <location>
        <position position="209"/>
    </location>
    <ligand>
        <name>Zn(2+)</name>
        <dbReference type="ChEBI" id="CHEBI:29105"/>
    </ligand>
</feature>
<feature type="binding site" evidence="1">
    <location>
        <position position="234"/>
    </location>
    <ligand>
        <name>Zn(2+)</name>
        <dbReference type="ChEBI" id="CHEBI:29105"/>
    </ligand>
</feature>
<feature type="binding site" evidence="1">
    <location>
        <position position="238"/>
    </location>
    <ligand>
        <name>Zn(2+)</name>
        <dbReference type="ChEBI" id="CHEBI:29105"/>
    </ligand>
</feature>
<feature type="binding site" evidence="1">
    <location>
        <position position="269"/>
    </location>
    <ligand>
        <name>ATP</name>
        <dbReference type="ChEBI" id="CHEBI:30616"/>
    </ligand>
</feature>
<reference key="1">
    <citation type="journal article" date="2007" name="J. Bacteriol.">
        <title>The genome sequence of avian pathogenic Escherichia coli strain O1:K1:H7 shares strong similarities with human extraintestinal pathogenic E. coli genomes.</title>
        <authorList>
            <person name="Johnson T.J."/>
            <person name="Kariyawasam S."/>
            <person name="Wannemuehler Y."/>
            <person name="Mangiamele P."/>
            <person name="Johnson S.J."/>
            <person name="Doetkott C."/>
            <person name="Skyberg J.A."/>
            <person name="Lynne A.M."/>
            <person name="Johnson J.R."/>
            <person name="Nolan L.K."/>
        </authorList>
    </citation>
    <scope>NUCLEOTIDE SEQUENCE [LARGE SCALE GENOMIC DNA]</scope>
</reference>
<proteinExistence type="inferred from homology"/>
<keyword id="KW-0030">Aminoacyl-tRNA synthetase</keyword>
<keyword id="KW-0067">ATP-binding</keyword>
<keyword id="KW-0963">Cytoplasm</keyword>
<keyword id="KW-0436">Ligase</keyword>
<keyword id="KW-0479">Metal-binding</keyword>
<keyword id="KW-0547">Nucleotide-binding</keyword>
<keyword id="KW-0648">Protein biosynthesis</keyword>
<keyword id="KW-1185">Reference proteome</keyword>
<keyword id="KW-0862">Zinc</keyword>
<dbReference type="EC" id="6.1.1.16" evidence="1"/>
<dbReference type="EMBL" id="CP000468">
    <property type="protein sequence ID" value="ABI99981.1"/>
    <property type="molecule type" value="Genomic_DNA"/>
</dbReference>
<dbReference type="RefSeq" id="WP_000912345.1">
    <property type="nucleotide sequence ID" value="NZ_CADILS010000009.1"/>
</dbReference>
<dbReference type="SMR" id="A1A8J2"/>
<dbReference type="GeneID" id="75204392"/>
<dbReference type="KEGG" id="ecv:APECO1_1488"/>
<dbReference type="HOGENOM" id="CLU_013528_0_1_6"/>
<dbReference type="Proteomes" id="UP000008216">
    <property type="component" value="Chromosome"/>
</dbReference>
<dbReference type="GO" id="GO:0005829">
    <property type="term" value="C:cytosol"/>
    <property type="evidence" value="ECO:0007669"/>
    <property type="project" value="TreeGrafter"/>
</dbReference>
<dbReference type="GO" id="GO:0005524">
    <property type="term" value="F:ATP binding"/>
    <property type="evidence" value="ECO:0007669"/>
    <property type="project" value="UniProtKB-UniRule"/>
</dbReference>
<dbReference type="GO" id="GO:0004817">
    <property type="term" value="F:cysteine-tRNA ligase activity"/>
    <property type="evidence" value="ECO:0007669"/>
    <property type="project" value="UniProtKB-UniRule"/>
</dbReference>
<dbReference type="GO" id="GO:0008270">
    <property type="term" value="F:zinc ion binding"/>
    <property type="evidence" value="ECO:0007669"/>
    <property type="project" value="UniProtKB-UniRule"/>
</dbReference>
<dbReference type="GO" id="GO:0006423">
    <property type="term" value="P:cysteinyl-tRNA aminoacylation"/>
    <property type="evidence" value="ECO:0007669"/>
    <property type="project" value="UniProtKB-UniRule"/>
</dbReference>
<dbReference type="CDD" id="cd07963">
    <property type="entry name" value="Anticodon_Ia_Cys"/>
    <property type="match status" value="1"/>
</dbReference>
<dbReference type="CDD" id="cd00672">
    <property type="entry name" value="CysRS_core"/>
    <property type="match status" value="1"/>
</dbReference>
<dbReference type="FunFam" id="1.20.120.1910:FF:000001">
    <property type="entry name" value="Cysteine--tRNA ligase"/>
    <property type="match status" value="1"/>
</dbReference>
<dbReference type="FunFam" id="3.40.50.620:FF:000009">
    <property type="entry name" value="Cysteine--tRNA ligase"/>
    <property type="match status" value="1"/>
</dbReference>
<dbReference type="Gene3D" id="1.20.120.1910">
    <property type="entry name" value="Cysteine-tRNA ligase, C-terminal anti-codon recognition domain"/>
    <property type="match status" value="1"/>
</dbReference>
<dbReference type="Gene3D" id="3.40.50.620">
    <property type="entry name" value="HUPs"/>
    <property type="match status" value="1"/>
</dbReference>
<dbReference type="HAMAP" id="MF_00041">
    <property type="entry name" value="Cys_tRNA_synth"/>
    <property type="match status" value="1"/>
</dbReference>
<dbReference type="InterPro" id="IPR015803">
    <property type="entry name" value="Cys-tRNA-ligase"/>
</dbReference>
<dbReference type="InterPro" id="IPR015273">
    <property type="entry name" value="Cys-tRNA-synt_Ia_DALR"/>
</dbReference>
<dbReference type="InterPro" id="IPR024909">
    <property type="entry name" value="Cys-tRNA/MSH_ligase"/>
</dbReference>
<dbReference type="InterPro" id="IPR056411">
    <property type="entry name" value="CysS_C"/>
</dbReference>
<dbReference type="InterPro" id="IPR014729">
    <property type="entry name" value="Rossmann-like_a/b/a_fold"/>
</dbReference>
<dbReference type="InterPro" id="IPR032678">
    <property type="entry name" value="tRNA-synt_1_cat_dom"/>
</dbReference>
<dbReference type="InterPro" id="IPR009080">
    <property type="entry name" value="tRNAsynth_Ia_anticodon-bd"/>
</dbReference>
<dbReference type="NCBIfam" id="TIGR00435">
    <property type="entry name" value="cysS"/>
    <property type="match status" value="1"/>
</dbReference>
<dbReference type="PANTHER" id="PTHR10890:SF3">
    <property type="entry name" value="CYSTEINE--TRNA LIGASE, CYTOPLASMIC"/>
    <property type="match status" value="1"/>
</dbReference>
<dbReference type="PANTHER" id="PTHR10890">
    <property type="entry name" value="CYSTEINYL-TRNA SYNTHETASE"/>
    <property type="match status" value="1"/>
</dbReference>
<dbReference type="Pfam" id="PF23493">
    <property type="entry name" value="CysS_C"/>
    <property type="match status" value="1"/>
</dbReference>
<dbReference type="Pfam" id="PF09190">
    <property type="entry name" value="DALR_2"/>
    <property type="match status" value="1"/>
</dbReference>
<dbReference type="Pfam" id="PF01406">
    <property type="entry name" value="tRNA-synt_1e"/>
    <property type="match status" value="1"/>
</dbReference>
<dbReference type="PRINTS" id="PR00983">
    <property type="entry name" value="TRNASYNTHCYS"/>
</dbReference>
<dbReference type="SMART" id="SM00840">
    <property type="entry name" value="DALR_2"/>
    <property type="match status" value="1"/>
</dbReference>
<dbReference type="SUPFAM" id="SSF47323">
    <property type="entry name" value="Anticodon-binding domain of a subclass of class I aminoacyl-tRNA synthetases"/>
    <property type="match status" value="1"/>
</dbReference>
<dbReference type="SUPFAM" id="SSF52374">
    <property type="entry name" value="Nucleotidylyl transferase"/>
    <property type="match status" value="1"/>
</dbReference>
<protein>
    <recommendedName>
        <fullName evidence="1">Cysteine--tRNA ligase</fullName>
        <ecNumber evidence="1">6.1.1.16</ecNumber>
    </recommendedName>
    <alternativeName>
        <fullName evidence="1">Cysteinyl-tRNA synthetase</fullName>
        <shortName evidence="1">CysRS</shortName>
    </alternativeName>
</protein>
<accession>A1A8J2</accession>
<evidence type="ECO:0000255" key="1">
    <source>
        <dbReference type="HAMAP-Rule" id="MF_00041"/>
    </source>
</evidence>
<gene>
    <name evidence="1" type="primary">cysS</name>
    <name type="ordered locus">Ecok1_04880</name>
    <name type="ORF">APECO1_1488</name>
</gene>
<sequence>MLKIFNTLTRQKEEFKPIHAGEVGMYVCGITVYDLCHIGHGRTFVAFDVVARYLRFLGYKLKYVRNITDIDDKIIKRANENGESFVALVDRMIAEMHKDFDALNILRPDMEPRATHHIAEIIELTEQLIAKGHAYVADNGDVMFDVPTDPTYGVLSRQDLDQLQAGARVDVVDDKRNPMDFVLWKMSKEGEPSWPSPWGAGRPGWHIECSAMNCKQLGNHFDIHGGGSDLMFPHHENEIAQSTCAHDGQYVNYWMHSGMVMVDREKMSKSLGNFFTVRDVLKYYDAETVRYFLMSGHYRSQLNYSEENLKQARAALERLYTALRGTDKTVAPAGGEAFEARFIEAMDDDFNTPEAYSVLFDMAREVNRLKAEDMAAANAMASHLRKLSAVLGLLEQEPEAFLQSGAQADDSEVAEIEALIQQRLDARKAKDWAAADAARDRLNEMGIVLEDGPQGTTWRRK</sequence>